<comment type="function">
    <text evidence="1">Catalyzes the hydroxylation of 2-nonaprenyl-3-methyl-6-methoxy-1,4-benzoquinol during ubiquinone biosynthesis.</text>
</comment>
<comment type="catalytic activity">
    <reaction evidence="1">
        <text>a 5-methoxy-2-methyl-3-(all-trans-polyprenyl)benzene-1,4-diol + AH2 + O2 = a 3-demethylubiquinol + A + H2O</text>
        <dbReference type="Rhea" id="RHEA:50908"/>
        <dbReference type="Rhea" id="RHEA-COMP:10859"/>
        <dbReference type="Rhea" id="RHEA-COMP:10914"/>
        <dbReference type="ChEBI" id="CHEBI:13193"/>
        <dbReference type="ChEBI" id="CHEBI:15377"/>
        <dbReference type="ChEBI" id="CHEBI:15379"/>
        <dbReference type="ChEBI" id="CHEBI:17499"/>
        <dbReference type="ChEBI" id="CHEBI:84167"/>
        <dbReference type="ChEBI" id="CHEBI:84422"/>
        <dbReference type="EC" id="1.14.99.60"/>
    </reaction>
</comment>
<comment type="cofactor">
    <cofactor evidence="1">
        <name>Fe cation</name>
        <dbReference type="ChEBI" id="CHEBI:24875"/>
    </cofactor>
    <text evidence="1">Binds 2 iron ions per subunit.</text>
</comment>
<comment type="pathway">
    <text evidence="1">Cofactor biosynthesis; ubiquinone biosynthesis.</text>
</comment>
<comment type="subcellular location">
    <subcellularLocation>
        <location evidence="1">Cell membrane</location>
        <topology evidence="1">Peripheral membrane protein</topology>
    </subcellularLocation>
</comment>
<comment type="similarity">
    <text evidence="1">Belongs to the COQ7 family.</text>
</comment>
<reference key="1">
    <citation type="journal article" date="2007" name="Environ. Microbiol.">
        <title>Whole-genome analysis of the ammonia-oxidizing bacterium, Nitrosomonas eutropha C91: implications for niche adaptation.</title>
        <authorList>
            <person name="Stein L.Y."/>
            <person name="Arp D.J."/>
            <person name="Berube P.M."/>
            <person name="Chain P.S."/>
            <person name="Hauser L."/>
            <person name="Jetten M.S."/>
            <person name="Klotz M.G."/>
            <person name="Larimer F.W."/>
            <person name="Norton J.M."/>
            <person name="Op den Camp H.J.M."/>
            <person name="Shin M."/>
            <person name="Wei X."/>
        </authorList>
    </citation>
    <scope>NUCLEOTIDE SEQUENCE [LARGE SCALE GENOMIC DNA]</scope>
    <source>
        <strain>DSM 101675 / C91 / Nm57</strain>
    </source>
</reference>
<accession>Q0AIU7</accession>
<organism>
    <name type="scientific">Nitrosomonas eutropha (strain DSM 101675 / C91 / Nm57)</name>
    <dbReference type="NCBI Taxonomy" id="335283"/>
    <lineage>
        <taxon>Bacteria</taxon>
        <taxon>Pseudomonadati</taxon>
        <taxon>Pseudomonadota</taxon>
        <taxon>Betaproteobacteria</taxon>
        <taxon>Nitrosomonadales</taxon>
        <taxon>Nitrosomonadaceae</taxon>
        <taxon>Nitrosomonas</taxon>
    </lineage>
</organism>
<keyword id="KW-1003">Cell membrane</keyword>
<keyword id="KW-0408">Iron</keyword>
<keyword id="KW-0472">Membrane</keyword>
<keyword id="KW-0479">Metal-binding</keyword>
<keyword id="KW-0503">Monooxygenase</keyword>
<keyword id="KW-0560">Oxidoreductase</keyword>
<keyword id="KW-0831">Ubiquinone biosynthesis</keyword>
<sequence length="208" mass="22946">MLNVDKLIIGFDNALRTLLAPAATLRPIPGKDLPENELSKIEKRESAALMRINHVGEVCAQALYQGQALTARNEQVRQALDQAAREETEHLAWTERRIAELGGHKSFLNPLWYGGSFALGLVAGVLGDKWNLGFLAETERQVEAHLADHLQRLPHQDVRSRAIVSQMKVDEACHATMAVSYGGGPLPVPIKAVMKFSSGIMTRTAYWV</sequence>
<evidence type="ECO:0000255" key="1">
    <source>
        <dbReference type="HAMAP-Rule" id="MF_01658"/>
    </source>
</evidence>
<feature type="chain" id="PRO_0000338702" description="3-demethoxyubiquinol 3-hydroxylase">
    <location>
        <begin position="1"/>
        <end position="208"/>
    </location>
</feature>
<feature type="binding site" evidence="1">
    <location>
        <position position="57"/>
    </location>
    <ligand>
        <name>Fe cation</name>
        <dbReference type="ChEBI" id="CHEBI:24875"/>
        <label>1</label>
    </ligand>
</feature>
<feature type="binding site" evidence="1">
    <location>
        <position position="87"/>
    </location>
    <ligand>
        <name>Fe cation</name>
        <dbReference type="ChEBI" id="CHEBI:24875"/>
        <label>1</label>
    </ligand>
</feature>
<feature type="binding site" evidence="1">
    <location>
        <position position="87"/>
    </location>
    <ligand>
        <name>Fe cation</name>
        <dbReference type="ChEBI" id="CHEBI:24875"/>
        <label>2</label>
    </ligand>
</feature>
<feature type="binding site" evidence="1">
    <location>
        <position position="90"/>
    </location>
    <ligand>
        <name>Fe cation</name>
        <dbReference type="ChEBI" id="CHEBI:24875"/>
        <label>1</label>
    </ligand>
</feature>
<feature type="binding site" evidence="1">
    <location>
        <position position="139"/>
    </location>
    <ligand>
        <name>Fe cation</name>
        <dbReference type="ChEBI" id="CHEBI:24875"/>
        <label>2</label>
    </ligand>
</feature>
<feature type="binding site" evidence="1">
    <location>
        <position position="171"/>
    </location>
    <ligand>
        <name>Fe cation</name>
        <dbReference type="ChEBI" id="CHEBI:24875"/>
        <label>1</label>
    </ligand>
</feature>
<feature type="binding site" evidence="1">
    <location>
        <position position="171"/>
    </location>
    <ligand>
        <name>Fe cation</name>
        <dbReference type="ChEBI" id="CHEBI:24875"/>
        <label>2</label>
    </ligand>
</feature>
<feature type="binding site" evidence="1">
    <location>
        <position position="174"/>
    </location>
    <ligand>
        <name>Fe cation</name>
        <dbReference type="ChEBI" id="CHEBI:24875"/>
        <label>2</label>
    </ligand>
</feature>
<gene>
    <name evidence="1" type="primary">coq7</name>
    <name type="ordered locus">Neut_0447</name>
</gene>
<dbReference type="EC" id="1.14.99.60" evidence="1"/>
<dbReference type="EMBL" id="CP000450">
    <property type="protein sequence ID" value="ABI58724.1"/>
    <property type="molecule type" value="Genomic_DNA"/>
</dbReference>
<dbReference type="RefSeq" id="WP_011633566.1">
    <property type="nucleotide sequence ID" value="NC_008344.1"/>
</dbReference>
<dbReference type="SMR" id="Q0AIU7"/>
<dbReference type="STRING" id="335283.Neut_0447"/>
<dbReference type="KEGG" id="net:Neut_0447"/>
<dbReference type="eggNOG" id="COG2941">
    <property type="taxonomic scope" value="Bacteria"/>
</dbReference>
<dbReference type="HOGENOM" id="CLU_088601_0_0_4"/>
<dbReference type="OrthoDB" id="5192789at2"/>
<dbReference type="UniPathway" id="UPA00232"/>
<dbReference type="Proteomes" id="UP000001966">
    <property type="component" value="Chromosome"/>
</dbReference>
<dbReference type="GO" id="GO:0005886">
    <property type="term" value="C:plasma membrane"/>
    <property type="evidence" value="ECO:0007669"/>
    <property type="project" value="UniProtKB-SubCell"/>
</dbReference>
<dbReference type="GO" id="GO:0008682">
    <property type="term" value="F:3-demethoxyubiquinol 3-hydroxylase activity"/>
    <property type="evidence" value="ECO:0007669"/>
    <property type="project" value="UniProtKB-EC"/>
</dbReference>
<dbReference type="GO" id="GO:0046872">
    <property type="term" value="F:metal ion binding"/>
    <property type="evidence" value="ECO:0007669"/>
    <property type="project" value="UniProtKB-KW"/>
</dbReference>
<dbReference type="GO" id="GO:0006744">
    <property type="term" value="P:ubiquinone biosynthetic process"/>
    <property type="evidence" value="ECO:0007669"/>
    <property type="project" value="UniProtKB-UniRule"/>
</dbReference>
<dbReference type="CDD" id="cd01042">
    <property type="entry name" value="DMQH"/>
    <property type="match status" value="1"/>
</dbReference>
<dbReference type="Gene3D" id="1.20.1260.10">
    <property type="match status" value="1"/>
</dbReference>
<dbReference type="HAMAP" id="MF_01658">
    <property type="entry name" value="COQ7"/>
    <property type="match status" value="1"/>
</dbReference>
<dbReference type="InterPro" id="IPR047809">
    <property type="entry name" value="COQ7_proteobact"/>
</dbReference>
<dbReference type="InterPro" id="IPR012347">
    <property type="entry name" value="Ferritin-like"/>
</dbReference>
<dbReference type="InterPro" id="IPR009078">
    <property type="entry name" value="Ferritin-like_SF"/>
</dbReference>
<dbReference type="InterPro" id="IPR011566">
    <property type="entry name" value="Ubq_synth_Coq7"/>
</dbReference>
<dbReference type="NCBIfam" id="NF033656">
    <property type="entry name" value="DMQ_monoox_COQ7"/>
    <property type="match status" value="1"/>
</dbReference>
<dbReference type="PANTHER" id="PTHR11237:SF4">
    <property type="entry name" value="5-DEMETHOXYUBIQUINONE HYDROXYLASE, MITOCHONDRIAL"/>
    <property type="match status" value="1"/>
</dbReference>
<dbReference type="PANTHER" id="PTHR11237">
    <property type="entry name" value="COENZYME Q10 BIOSYNTHESIS PROTEIN 7"/>
    <property type="match status" value="1"/>
</dbReference>
<dbReference type="Pfam" id="PF03232">
    <property type="entry name" value="COQ7"/>
    <property type="match status" value="1"/>
</dbReference>
<dbReference type="SUPFAM" id="SSF47240">
    <property type="entry name" value="Ferritin-like"/>
    <property type="match status" value="1"/>
</dbReference>
<proteinExistence type="inferred from homology"/>
<protein>
    <recommendedName>
        <fullName evidence="1">3-demethoxyubiquinol 3-hydroxylase</fullName>
        <shortName evidence="1">DMQ hydroxylase</shortName>
        <ecNumber evidence="1">1.14.99.60</ecNumber>
    </recommendedName>
    <alternativeName>
        <fullName evidence="1">2-nonaprenyl-3-methyl-6-methoxy-1,4-benzoquinol hydroxylase</fullName>
    </alternativeName>
</protein>
<name>COQ7_NITEC</name>